<sequence length="115" mass="13130">MSNIIKQLEQEQMKQNVPSFRPGDTVEVKVWVVEGTKKRLQAFEGVVIAIRNRGLHSAFTVRKISNGEGVERVFQTHSPVVDSIAVKRRGAVRKAKLYYLRERTGKAARIKERLN</sequence>
<organism>
    <name type="scientific">Salmonella paratyphi B (strain ATCC BAA-1250 / SPB7)</name>
    <dbReference type="NCBI Taxonomy" id="1016998"/>
    <lineage>
        <taxon>Bacteria</taxon>
        <taxon>Pseudomonadati</taxon>
        <taxon>Pseudomonadota</taxon>
        <taxon>Gammaproteobacteria</taxon>
        <taxon>Enterobacterales</taxon>
        <taxon>Enterobacteriaceae</taxon>
        <taxon>Salmonella</taxon>
    </lineage>
</organism>
<accession>A9MZ47</accession>
<protein>
    <recommendedName>
        <fullName evidence="1">Large ribosomal subunit protein bL19</fullName>
    </recommendedName>
    <alternativeName>
        <fullName evidence="2">50S ribosomal protein L19</fullName>
    </alternativeName>
</protein>
<dbReference type="EMBL" id="CP000886">
    <property type="protein sequence ID" value="ABX68736.1"/>
    <property type="molecule type" value="Genomic_DNA"/>
</dbReference>
<dbReference type="RefSeq" id="WP_000065257.1">
    <property type="nucleotide sequence ID" value="NC_010102.1"/>
</dbReference>
<dbReference type="SMR" id="A9MZ47"/>
<dbReference type="KEGG" id="spq:SPAB_03385"/>
<dbReference type="PATRIC" id="fig|1016998.12.peg.3190"/>
<dbReference type="HOGENOM" id="CLU_103507_2_1_6"/>
<dbReference type="BioCyc" id="SENT1016998:SPAB_RS13830-MONOMER"/>
<dbReference type="Proteomes" id="UP000008556">
    <property type="component" value="Chromosome"/>
</dbReference>
<dbReference type="GO" id="GO:0022625">
    <property type="term" value="C:cytosolic large ribosomal subunit"/>
    <property type="evidence" value="ECO:0007669"/>
    <property type="project" value="TreeGrafter"/>
</dbReference>
<dbReference type="GO" id="GO:0003735">
    <property type="term" value="F:structural constituent of ribosome"/>
    <property type="evidence" value="ECO:0007669"/>
    <property type="project" value="InterPro"/>
</dbReference>
<dbReference type="GO" id="GO:0006412">
    <property type="term" value="P:translation"/>
    <property type="evidence" value="ECO:0007669"/>
    <property type="project" value="UniProtKB-UniRule"/>
</dbReference>
<dbReference type="FunFam" id="2.30.30.790:FF:000001">
    <property type="entry name" value="50S ribosomal protein L19"/>
    <property type="match status" value="1"/>
</dbReference>
<dbReference type="Gene3D" id="2.30.30.790">
    <property type="match status" value="1"/>
</dbReference>
<dbReference type="HAMAP" id="MF_00402">
    <property type="entry name" value="Ribosomal_bL19"/>
    <property type="match status" value="1"/>
</dbReference>
<dbReference type="InterPro" id="IPR001857">
    <property type="entry name" value="Ribosomal_bL19"/>
</dbReference>
<dbReference type="InterPro" id="IPR018257">
    <property type="entry name" value="Ribosomal_bL19_CS"/>
</dbReference>
<dbReference type="InterPro" id="IPR038657">
    <property type="entry name" value="Ribosomal_bL19_sf"/>
</dbReference>
<dbReference type="InterPro" id="IPR008991">
    <property type="entry name" value="Translation_prot_SH3-like_sf"/>
</dbReference>
<dbReference type="NCBIfam" id="TIGR01024">
    <property type="entry name" value="rplS_bact"/>
    <property type="match status" value="1"/>
</dbReference>
<dbReference type="PANTHER" id="PTHR15680:SF9">
    <property type="entry name" value="LARGE RIBOSOMAL SUBUNIT PROTEIN BL19M"/>
    <property type="match status" value="1"/>
</dbReference>
<dbReference type="PANTHER" id="PTHR15680">
    <property type="entry name" value="RIBOSOMAL PROTEIN L19"/>
    <property type="match status" value="1"/>
</dbReference>
<dbReference type="Pfam" id="PF01245">
    <property type="entry name" value="Ribosomal_L19"/>
    <property type="match status" value="1"/>
</dbReference>
<dbReference type="PIRSF" id="PIRSF002191">
    <property type="entry name" value="Ribosomal_L19"/>
    <property type="match status" value="1"/>
</dbReference>
<dbReference type="PRINTS" id="PR00061">
    <property type="entry name" value="RIBOSOMALL19"/>
</dbReference>
<dbReference type="SUPFAM" id="SSF50104">
    <property type="entry name" value="Translation proteins SH3-like domain"/>
    <property type="match status" value="1"/>
</dbReference>
<dbReference type="PROSITE" id="PS01015">
    <property type="entry name" value="RIBOSOMAL_L19"/>
    <property type="match status" value="1"/>
</dbReference>
<comment type="function">
    <text evidence="1">This protein is located at the 30S-50S ribosomal subunit interface and may play a role in the structure and function of the aminoacyl-tRNA binding site.</text>
</comment>
<comment type="similarity">
    <text evidence="1">Belongs to the bacterial ribosomal protein bL19 family.</text>
</comment>
<keyword id="KW-0687">Ribonucleoprotein</keyword>
<keyword id="KW-0689">Ribosomal protein</keyword>
<proteinExistence type="inferred from homology"/>
<feature type="chain" id="PRO_1000080369" description="Large ribosomal subunit protein bL19">
    <location>
        <begin position="1"/>
        <end position="115"/>
    </location>
</feature>
<evidence type="ECO:0000255" key="1">
    <source>
        <dbReference type="HAMAP-Rule" id="MF_00402"/>
    </source>
</evidence>
<evidence type="ECO:0000305" key="2"/>
<name>RL19_SALPB</name>
<reference key="1">
    <citation type="submission" date="2007-11" db="EMBL/GenBank/DDBJ databases">
        <authorList>
            <consortium name="The Salmonella enterica serovar Paratyphi B Genome Sequencing Project"/>
            <person name="McClelland M."/>
            <person name="Sanderson E.K."/>
            <person name="Porwollik S."/>
            <person name="Spieth J."/>
            <person name="Clifton W.S."/>
            <person name="Fulton R."/>
            <person name="Cordes M."/>
            <person name="Wollam A."/>
            <person name="Shah N."/>
            <person name="Pepin K."/>
            <person name="Bhonagiri V."/>
            <person name="Nash W."/>
            <person name="Johnson M."/>
            <person name="Thiruvilangam P."/>
            <person name="Wilson R."/>
        </authorList>
    </citation>
    <scope>NUCLEOTIDE SEQUENCE [LARGE SCALE GENOMIC DNA]</scope>
    <source>
        <strain>ATCC BAA-1250 / SPB7</strain>
    </source>
</reference>
<gene>
    <name evidence="1" type="primary">rplS</name>
    <name type="ordered locus">SPAB_03385</name>
</gene>